<name>IEMOX_PSENT</name>
<accession>C3VA26</accession>
<proteinExistence type="evidence at protein level"/>
<sequence>MARLNRNDPQLVGTLLPTRIEADLFDLEVDGEIPKSINGTFYRNTPEPQVTPQKFHTFIDGDGMASAFHFEDGHVDFISRWVKTARFTAERLARKSLFGMYRNPYTDDTSVKGLDRTVANTSIISHHGKVLAVKEDGLPYELDPRTLETRGRFDYDGQVTSQTHTAHPKYDPETGDLLFFGSAAKGEATPDMAYYIVDKHGKVTHETWFEQPYGAFMHDFAITRNWSIFPIMPATNSLSRLKAKQPIYMWEPELGSYIGVLPRRGQGSQIRWLKAPALWVFHVVNAWEVGTKIYIDLMESEILPFPFPNSQNQPFAPEKAVPRLTRWEIDLDSSSDEIKRTRLHDFFAEMPIMDFRFALQCNRYGFMGVDDPRKPLAHQQAEKIFAYNSLGIWDNHRGDYDLWYSGEASAAQEPAFVPRSPTAAEGDGYLLTVVGRLDENRSDLVILDTQDIQSGPVATIKLPFRLRAALHGCWVPRP</sequence>
<comment type="function">
    <text evidence="2 3">Involved in isoeugenol degradation (PubMed:20091296). Catalyzes the oxidative cleavage of the side chain double-bond of isoeugenol to form vanillin and acetaldehyde (PubMed:20091296, PubMed:23391906).</text>
</comment>
<comment type="catalytic activity">
    <reaction evidence="3 6">
        <text>(E)-isoeugenol + O2 = vanillin + acetaldehyde</text>
        <dbReference type="Rhea" id="RHEA:58068"/>
        <dbReference type="ChEBI" id="CHEBI:15343"/>
        <dbReference type="ChEBI" id="CHEBI:15379"/>
        <dbReference type="ChEBI" id="CHEBI:18346"/>
        <dbReference type="ChEBI" id="CHEBI:50545"/>
        <dbReference type="EC" id="1.13.11.88"/>
    </reaction>
    <physiologicalReaction direction="left-to-right" evidence="3">
        <dbReference type="Rhea" id="RHEA:58069"/>
    </physiologicalReaction>
</comment>
<comment type="cofactor">
    <cofactor evidence="3">
        <name>Fe(2+)</name>
        <dbReference type="ChEBI" id="CHEBI:29033"/>
    </cofactor>
    <text evidence="1">1 Fe(2+) ion per subunit.</text>
</comment>
<comment type="activity regulation">
    <text evidence="3">Inhibited by Co(2+), Ni(2+) and Zn(2+), which may inhibit enzyme activity by replacing iron in the catalytic residues (PubMed:23391906). Inhibited by incubation with high concentrations of the iron chelators 1,10-phenanthroline and Tiron (PubMed:23391906). However, iron is not completely removed by the chelators, suggesting that iron is tightly bound to the enzyme (PubMed:23391906).</text>
</comment>
<comment type="biophysicochemical properties">
    <kinetics>
        <KM evidence="3">120 uM for isoeugenol</KM>
        <Vmax evidence="3">4.2 umol/min/mg enzyme</Vmax>
        <text evidence="3">kcat is 3.84 sec(-1).</text>
    </kinetics>
    <phDependence>
        <text evidence="3">Optimum pH is 9.0.</text>
    </phDependence>
    <temperatureDependence>
        <text evidence="3">Optimum temperature is 30 degrees Celsius. Activity is lost above 40 degrees Celsius.</text>
    </temperatureDependence>
</comment>
<comment type="induction">
    <text evidence="2">Induced by eugenol and isoeugenol.</text>
</comment>
<comment type="biotechnology">
    <text evidence="6">This enzyme may be useful to construct bacterial strains producing vanillin economically from the abundant natural product isoeugenol.</text>
</comment>
<comment type="similarity">
    <text evidence="5">Belongs to the carotenoid oxygenase family.</text>
</comment>
<keyword id="KW-0408">Iron</keyword>
<keyword id="KW-0479">Metal-binding</keyword>
<keyword id="KW-0503">Monooxygenase</keyword>
<keyword id="KW-0560">Oxidoreductase</keyword>
<feature type="chain" id="PRO_0000457754" description="Isoeugenol monooxygenase">
    <location>
        <begin position="1"/>
        <end position="478"/>
    </location>
</feature>
<feature type="binding site" evidence="1">
    <location>
        <position position="167"/>
    </location>
    <ligand>
        <name>Fe cation</name>
        <dbReference type="ChEBI" id="CHEBI:24875"/>
        <note>catalytic</note>
    </ligand>
</feature>
<feature type="binding site" evidence="1">
    <location>
        <position position="218"/>
    </location>
    <ligand>
        <name>Fe cation</name>
        <dbReference type="ChEBI" id="CHEBI:24875"/>
        <note>catalytic</note>
    </ligand>
</feature>
<feature type="binding site" evidence="1">
    <location>
        <position position="282"/>
    </location>
    <ligand>
        <name>Fe cation</name>
        <dbReference type="ChEBI" id="CHEBI:24875"/>
        <note>catalytic</note>
    </ligand>
</feature>
<feature type="binding site" evidence="1">
    <location>
        <position position="471"/>
    </location>
    <ligand>
        <name>Fe cation</name>
        <dbReference type="ChEBI" id="CHEBI:24875"/>
        <note>catalytic</note>
    </ligand>
</feature>
<feature type="mutagenesis site" description="Loss of activity." evidence="3">
    <original>H</original>
    <variation>A</variation>
    <location>
        <position position="167"/>
    </location>
</feature>
<feature type="mutagenesis site" description="Retains 7% of activity." evidence="3">
    <original>H</original>
    <variation>A</variation>
    <location>
        <position position="205"/>
    </location>
</feature>
<feature type="mutagenesis site" description="Loss of activity." evidence="3">
    <original>H</original>
    <variation>A</variation>
    <location>
        <position position="218"/>
    </location>
</feature>
<feature type="mutagenesis site" description="Loss of activity." evidence="3">
    <original>H</original>
    <variation>A</variation>
    <location>
        <position position="282"/>
    </location>
</feature>
<feature type="mutagenesis site" description="Loss of activity." evidence="3">
    <original>H</original>
    <variation>A</variation>
    <location>
        <position position="471"/>
    </location>
</feature>
<organism>
    <name type="scientific">Pseudomonas nitroreducens</name>
    <dbReference type="NCBI Taxonomy" id="46680"/>
    <lineage>
        <taxon>Bacteria</taxon>
        <taxon>Pseudomonadati</taxon>
        <taxon>Pseudomonadota</taxon>
        <taxon>Gammaproteobacteria</taxon>
        <taxon>Pseudomonadales</taxon>
        <taxon>Pseudomonadaceae</taxon>
        <taxon>Pseudomonas</taxon>
    </lineage>
</organism>
<protein>
    <recommendedName>
        <fullName evidence="4">Isoeugenol monooxygenase</fullName>
        <ecNumber evidence="3">1.13.11.88</ecNumber>
    </recommendedName>
</protein>
<reference key="1">
    <citation type="journal article" date="2010" name="Arch. Microbiol.">
        <title>Isoeugenol monooxygenase and its putative regulatory gene are located in the eugenol metabolic gene cluster in Pseudomonas nitroreducens Jin1.</title>
        <authorList>
            <person name="Ryu J.Y."/>
            <person name="Seo J."/>
            <person name="Unno T."/>
            <person name="Ahn J.H."/>
            <person name="Yan T."/>
            <person name="Sadowsky M.J."/>
            <person name="Hur H.G."/>
        </authorList>
    </citation>
    <scope>NUCLEOTIDE SEQUENCE [GENOMIC DNA]</scope>
    <scope>FUNCTION</scope>
    <scope>INDUCTION</scope>
    <scope>BIOTECHNOLOGY</scope>
    <source>
        <strain>Jin1</strain>
    </source>
</reference>
<reference key="2">
    <citation type="journal article" date="2013" name="Biosci. Biotechnol. Biochem.">
        <title>Characterization of an isoeugenol monooxygenase (Iem) from Pseudomonas nitroreducens Jin1 that transforms isoeugenol to vanillin.</title>
        <authorList>
            <person name="Ryu J.Y."/>
            <person name="Seo J."/>
            <person name="Park S."/>
            <person name="Ahn J.H."/>
            <person name="Chong Y."/>
            <person name="Sadowsky M.J."/>
            <person name="Hur H.G."/>
        </authorList>
    </citation>
    <scope>FUNCTION</scope>
    <scope>CATALYTIC ACTIVITY</scope>
    <scope>COFACTOR</scope>
    <scope>ACTIVITY REGULATION</scope>
    <scope>BIOPHYSICOCHEMICAL PROPERTIES</scope>
    <scope>MUTAGENESIS OF HIS-167; HIS-205; HIS-218; HIS-282 AND HIS-471</scope>
    <source>
        <strain>Jin1</strain>
    </source>
</reference>
<dbReference type="EC" id="1.13.11.88" evidence="3"/>
<dbReference type="EMBL" id="FJ851547">
    <property type="protein sequence ID" value="ACP17973.1"/>
    <property type="molecule type" value="Genomic_DNA"/>
</dbReference>
<dbReference type="SMR" id="C3VA26"/>
<dbReference type="KEGG" id="ag:ACP17973"/>
<dbReference type="BioCyc" id="MetaCyc:MONOMER-20664"/>
<dbReference type="BRENDA" id="1.13.11.88">
    <property type="organism ID" value="5096"/>
</dbReference>
<dbReference type="GO" id="GO:0010436">
    <property type="term" value="F:carotenoid dioxygenase activity"/>
    <property type="evidence" value="ECO:0007669"/>
    <property type="project" value="TreeGrafter"/>
</dbReference>
<dbReference type="GO" id="GO:0046872">
    <property type="term" value="F:metal ion binding"/>
    <property type="evidence" value="ECO:0007669"/>
    <property type="project" value="UniProtKB-KW"/>
</dbReference>
<dbReference type="GO" id="GO:0004497">
    <property type="term" value="F:monooxygenase activity"/>
    <property type="evidence" value="ECO:0007669"/>
    <property type="project" value="UniProtKB-KW"/>
</dbReference>
<dbReference type="GO" id="GO:0016121">
    <property type="term" value="P:carotene catabolic process"/>
    <property type="evidence" value="ECO:0007669"/>
    <property type="project" value="TreeGrafter"/>
</dbReference>
<dbReference type="InterPro" id="IPR004294">
    <property type="entry name" value="Carotenoid_Oase"/>
</dbReference>
<dbReference type="InterPro" id="IPR011047">
    <property type="entry name" value="Quinoprotein_ADH-like_sf"/>
</dbReference>
<dbReference type="PANTHER" id="PTHR10543">
    <property type="entry name" value="BETA-CAROTENE DIOXYGENASE"/>
    <property type="match status" value="1"/>
</dbReference>
<dbReference type="PANTHER" id="PTHR10543:SF89">
    <property type="entry name" value="CAROTENOID 9,10(9',10')-CLEAVAGE DIOXYGENASE 1"/>
    <property type="match status" value="1"/>
</dbReference>
<dbReference type="Pfam" id="PF03055">
    <property type="entry name" value="RPE65"/>
    <property type="match status" value="1"/>
</dbReference>
<dbReference type="SUPFAM" id="SSF50998">
    <property type="entry name" value="Quinoprotein alcohol dehydrogenase-like"/>
    <property type="match status" value="1"/>
</dbReference>
<evidence type="ECO:0000250" key="1">
    <source>
        <dbReference type="UniProtKB" id="P74334"/>
    </source>
</evidence>
<evidence type="ECO:0000269" key="2">
    <source>
    </source>
</evidence>
<evidence type="ECO:0000269" key="3">
    <source>
    </source>
</evidence>
<evidence type="ECO:0000303" key="4">
    <source>
    </source>
</evidence>
<evidence type="ECO:0000305" key="5"/>
<evidence type="ECO:0000305" key="6">
    <source>
    </source>
</evidence>
<gene>
    <name evidence="4" type="primary">iem</name>
</gene>